<keyword id="KW-0072">Autophagy</keyword>
<keyword id="KW-0967">Endosome</keyword>
<keyword id="KW-0472">Membrane</keyword>
<keyword id="KW-0653">Protein transport</keyword>
<keyword id="KW-1185">Reference proteome</keyword>
<keyword id="KW-0813">Transport</keyword>
<keyword id="KW-0926">Vacuole</keyword>
<proteinExistence type="inferred from homology"/>
<protein>
    <recommendedName>
        <fullName>Vacuolar fusion protein MON1</fullName>
    </recommendedName>
</protein>
<evidence type="ECO:0000250" key="1"/>
<evidence type="ECO:0000250" key="2">
    <source>
        <dbReference type="UniProtKB" id="P53129"/>
    </source>
</evidence>
<evidence type="ECO:0000256" key="3">
    <source>
        <dbReference type="SAM" id="MobiDB-lite"/>
    </source>
</evidence>
<evidence type="ECO:0000305" key="4"/>
<name>MON1_EREGS</name>
<sequence length="581" mass="64719">MSTSGSRDSASTRESARETRAGPQALPLGSVVSLSSMRSASPTHAPWVAKPTTSVDLTNHFMEVAARGGEEERSLASPGEEMQYELAHSMKAAPALPRELPSPFRAAGGRGALPQEKQFFVLTAAGKPIYSMHGPEELVMGLMGIAHTLLNYFELDGPRERLRTITTYDAHGVLQRFAFLRKKHVVLLAMTTRNEAEAELQQQLDLLYSYLVSSLSLRQMSRLFERANFDLRSFLTESDFHNLDQLCRAMCDGTHLGWTLGALECITLKHSVRQRINSIMLRATRGLAVGTLLYGMIVAPDHRLVSVLRPKGHTLHTTDLQLLFSMVENQLQLLHSSQEVWVPLCFPKFNGNGFLYCYIKFLPTDTDSASNETTLEGNMHIKPTLILISPQKSSFYDLHTCASEILDNLAVAGIMPHITAPSRFTINDIPAPLVHHFIYKSKKYVQYVMPETSSTTDWSTLMKYYSHLRSNALDSHGNPLSENVVAFARWCASSGQVQVEYCDSSEELQVEDQPSSIFSESFVEESLNMTGLSWITPSFELYLLCNNGEIPKAVVMKSARNVVGWCSRNGHKLFVSEGAVF</sequence>
<comment type="function">
    <text evidence="2">In complex with CCZ1, is required for multiple vacuole delivery pathways including the cytoplasm to vacuole transport (Cvt), autophagy, pexophagy and endocytosis. The MON1-CCZ1 complex acts at the fusion of vesicles with the vacuole, through its regulation of the SNARE complex during the coordinated priming and docking stages of fusion, and particularly at the stage of tethering/docking.</text>
</comment>
<comment type="subcellular location">
    <subcellularLocation>
        <location evidence="1">Endosome</location>
        <location evidence="1">Multivesicular body membrane</location>
        <topology evidence="1">Peripheral membrane protein</topology>
    </subcellularLocation>
    <subcellularLocation>
        <location evidence="1">Prevacuolar compartment membrane</location>
        <topology evidence="1">Peripheral membrane protein</topology>
    </subcellularLocation>
    <subcellularLocation>
        <location evidence="1">Vacuole membrane</location>
        <topology evidence="1">Peripheral membrane protein</topology>
    </subcellularLocation>
</comment>
<comment type="similarity">
    <text evidence="4">Belongs to the MON1/SAND family.</text>
</comment>
<organism>
    <name type="scientific">Eremothecium gossypii (strain ATCC 10895 / CBS 109.51 / FGSC 9923 / NRRL Y-1056)</name>
    <name type="common">Yeast</name>
    <name type="synonym">Ashbya gossypii</name>
    <dbReference type="NCBI Taxonomy" id="284811"/>
    <lineage>
        <taxon>Eukaryota</taxon>
        <taxon>Fungi</taxon>
        <taxon>Dikarya</taxon>
        <taxon>Ascomycota</taxon>
        <taxon>Saccharomycotina</taxon>
        <taxon>Saccharomycetes</taxon>
        <taxon>Saccharomycetales</taxon>
        <taxon>Saccharomycetaceae</taxon>
        <taxon>Eremothecium</taxon>
    </lineage>
</organism>
<feature type="chain" id="PRO_0000278851" description="Vacuolar fusion protein MON1">
    <location>
        <begin position="1"/>
        <end position="581"/>
    </location>
</feature>
<feature type="region of interest" description="Disordered" evidence="3">
    <location>
        <begin position="1"/>
        <end position="28"/>
    </location>
</feature>
<feature type="compositionally biased region" description="Basic and acidic residues" evidence="3">
    <location>
        <begin position="10"/>
        <end position="20"/>
    </location>
</feature>
<gene>
    <name type="primary">MON1</name>
    <name type="ordered locus">AAR175C</name>
</gene>
<reference key="1">
    <citation type="journal article" date="2004" name="Science">
        <title>The Ashbya gossypii genome as a tool for mapping the ancient Saccharomyces cerevisiae genome.</title>
        <authorList>
            <person name="Dietrich F.S."/>
            <person name="Voegeli S."/>
            <person name="Brachat S."/>
            <person name="Lerch A."/>
            <person name="Gates K."/>
            <person name="Steiner S."/>
            <person name="Mohr C."/>
            <person name="Poehlmann R."/>
            <person name="Luedi P."/>
            <person name="Choi S."/>
            <person name="Wing R.A."/>
            <person name="Flavier A."/>
            <person name="Gaffney T.D."/>
            <person name="Philippsen P."/>
        </authorList>
    </citation>
    <scope>NUCLEOTIDE SEQUENCE [LARGE SCALE GENOMIC DNA]</scope>
    <source>
        <strain>ATCC 10895 / CBS 109.51 / FGSC 9923 / NRRL Y-1056</strain>
    </source>
</reference>
<reference key="2">
    <citation type="journal article" date="2013" name="G3 (Bethesda)">
        <title>Genomes of Ashbya fungi isolated from insects reveal four mating-type loci, numerous translocations, lack of transposons, and distinct gene duplications.</title>
        <authorList>
            <person name="Dietrich F.S."/>
            <person name="Voegeli S."/>
            <person name="Kuo S."/>
            <person name="Philippsen P."/>
        </authorList>
    </citation>
    <scope>GENOME REANNOTATION</scope>
    <source>
        <strain>ATCC 10895 / CBS 109.51 / FGSC 9923 / NRRL Y-1056</strain>
    </source>
</reference>
<accession>Q75EA2</accession>
<dbReference type="EMBL" id="AE016814">
    <property type="protein sequence ID" value="AAS50542.2"/>
    <property type="molecule type" value="Genomic_DNA"/>
</dbReference>
<dbReference type="RefSeq" id="NP_982718.2">
    <property type="nucleotide sequence ID" value="NM_208071.2"/>
</dbReference>
<dbReference type="SMR" id="Q75EA2"/>
<dbReference type="FunCoup" id="Q75EA2">
    <property type="interactions" value="573"/>
</dbReference>
<dbReference type="STRING" id="284811.Q75EA2"/>
<dbReference type="EnsemblFungi" id="AAS50542">
    <property type="protein sequence ID" value="AAS50542"/>
    <property type="gene ID" value="AGOS_AAR175C"/>
</dbReference>
<dbReference type="GeneID" id="4618754"/>
<dbReference type="KEGG" id="ago:AGOS_AAR175C"/>
<dbReference type="eggNOG" id="KOG0997">
    <property type="taxonomic scope" value="Eukaryota"/>
</dbReference>
<dbReference type="HOGENOM" id="CLU_014574_0_0_1"/>
<dbReference type="InParanoid" id="Q75EA2"/>
<dbReference type="OMA" id="QQPFNAK"/>
<dbReference type="OrthoDB" id="272411at2759"/>
<dbReference type="Proteomes" id="UP000000591">
    <property type="component" value="Chromosome I"/>
</dbReference>
<dbReference type="GO" id="GO:0005829">
    <property type="term" value="C:cytosol"/>
    <property type="evidence" value="ECO:0007669"/>
    <property type="project" value="EnsemblFungi"/>
</dbReference>
<dbReference type="GO" id="GO:0000329">
    <property type="term" value="C:fungal-type vacuole membrane"/>
    <property type="evidence" value="ECO:0000318"/>
    <property type="project" value="GO_Central"/>
</dbReference>
<dbReference type="GO" id="GO:0035658">
    <property type="term" value="C:Mon1-Ccz1 complex"/>
    <property type="evidence" value="ECO:0000318"/>
    <property type="project" value="GO_Central"/>
</dbReference>
<dbReference type="GO" id="GO:0032585">
    <property type="term" value="C:multivesicular body membrane"/>
    <property type="evidence" value="ECO:0007669"/>
    <property type="project" value="UniProtKB-SubCell"/>
</dbReference>
<dbReference type="GO" id="GO:1990624">
    <property type="term" value="F:guanyl nucleotide exchange factor inhibitor activity"/>
    <property type="evidence" value="ECO:0007669"/>
    <property type="project" value="EnsemblFungi"/>
</dbReference>
<dbReference type="GO" id="GO:0005085">
    <property type="term" value="F:guanyl-nucleotide exchange factor activity"/>
    <property type="evidence" value="ECO:0007669"/>
    <property type="project" value="EnsemblFungi"/>
</dbReference>
<dbReference type="GO" id="GO:0032266">
    <property type="term" value="F:phosphatidylinositol-3-phosphate binding"/>
    <property type="evidence" value="ECO:0007669"/>
    <property type="project" value="EnsemblFungi"/>
</dbReference>
<dbReference type="GO" id="GO:0010314">
    <property type="term" value="F:phosphatidylinositol-5-phosphate binding"/>
    <property type="evidence" value="ECO:0007669"/>
    <property type="project" value="EnsemblFungi"/>
</dbReference>
<dbReference type="GO" id="GO:0001786">
    <property type="term" value="F:phosphatidylserine binding"/>
    <property type="evidence" value="ECO:0007669"/>
    <property type="project" value="EnsemblFungi"/>
</dbReference>
<dbReference type="GO" id="GO:0032258">
    <property type="term" value="P:cytoplasm to vacuole targeting by the Cvt pathway"/>
    <property type="evidence" value="ECO:0007669"/>
    <property type="project" value="EnsemblFungi"/>
</dbReference>
<dbReference type="GO" id="GO:0032511">
    <property type="term" value="P:late endosome to vacuole transport via multivesicular body sorting pathway"/>
    <property type="evidence" value="ECO:0007669"/>
    <property type="project" value="EnsemblFungi"/>
</dbReference>
<dbReference type="GO" id="GO:0016236">
    <property type="term" value="P:macroautophagy"/>
    <property type="evidence" value="ECO:0007669"/>
    <property type="project" value="EnsemblFungi"/>
</dbReference>
<dbReference type="GO" id="GO:0044395">
    <property type="term" value="P:protein targeting to vacuolar membrane"/>
    <property type="evidence" value="ECO:0007669"/>
    <property type="project" value="EnsemblFungi"/>
</dbReference>
<dbReference type="GO" id="GO:0006623">
    <property type="term" value="P:protein targeting to vacuole"/>
    <property type="evidence" value="ECO:0000318"/>
    <property type="project" value="GO_Central"/>
</dbReference>
<dbReference type="GO" id="GO:0048278">
    <property type="term" value="P:vesicle docking"/>
    <property type="evidence" value="ECO:0007669"/>
    <property type="project" value="EnsemblFungi"/>
</dbReference>
<dbReference type="InterPro" id="IPR043972">
    <property type="entry name" value="FUZ/MON1/HPS1_longin_1"/>
</dbReference>
<dbReference type="InterPro" id="IPR043971">
    <property type="entry name" value="FUZ/MON1/HPS1_longin_2"/>
</dbReference>
<dbReference type="InterPro" id="IPR043970">
    <property type="entry name" value="FUZ/MON1/HPS1_longin_3"/>
</dbReference>
<dbReference type="InterPro" id="IPR004353">
    <property type="entry name" value="Mon1"/>
</dbReference>
<dbReference type="PANTHER" id="PTHR13027">
    <property type="entry name" value="SAND PROTEIN-RELATED"/>
    <property type="match status" value="1"/>
</dbReference>
<dbReference type="PANTHER" id="PTHR13027:SF7">
    <property type="entry name" value="VACUOLAR FUSION PROTEIN MON1 HOMOLOG"/>
    <property type="match status" value="1"/>
</dbReference>
<dbReference type="Pfam" id="PF19036">
    <property type="entry name" value="Fuz_longin_1"/>
    <property type="match status" value="1"/>
</dbReference>
<dbReference type="Pfam" id="PF19037">
    <property type="entry name" value="Fuz_longin_2"/>
    <property type="match status" value="1"/>
</dbReference>
<dbReference type="Pfam" id="PF19038">
    <property type="entry name" value="Fuz_longin_3"/>
    <property type="match status" value="1"/>
</dbReference>
<dbReference type="PRINTS" id="PR01546">
    <property type="entry name" value="YEAST73DUF"/>
</dbReference>